<keyword id="KW-0007">Acetylation</keyword>
<keyword id="KW-0067">ATP-binding</keyword>
<keyword id="KW-0963">Cytoplasm</keyword>
<keyword id="KW-0206">Cytoskeleton</keyword>
<keyword id="KW-0378">Hydrolase</keyword>
<keyword id="KW-0547">Nucleotide-binding</keyword>
<name>ACT1_LUMTE</name>
<reference key="1">
    <citation type="journal article" date="1996" name="Gene">
        <title>Nucleotide sequence of two actin genes of Lumbricus terrestris.</title>
        <authorList>
            <person name="Lewke N."/>
            <person name="Weber K."/>
        </authorList>
    </citation>
    <scope>NUCLEOTIDE SEQUENCE [GENOMIC DNA / MRNA]</scope>
</reference>
<gene>
    <name type="primary">ACT1</name>
</gene>
<organism>
    <name type="scientific">Lumbricus terrestris</name>
    <name type="common">Common earthworm</name>
    <dbReference type="NCBI Taxonomy" id="6398"/>
    <lineage>
        <taxon>Eukaryota</taxon>
        <taxon>Metazoa</taxon>
        <taxon>Spiralia</taxon>
        <taxon>Lophotrochozoa</taxon>
        <taxon>Annelida</taxon>
        <taxon>Clitellata</taxon>
        <taxon>Oligochaeta</taxon>
        <taxon>Crassiclitellata</taxon>
        <taxon>Lumbricina</taxon>
        <taxon>Lumbricidae</taxon>
        <taxon>Lumbricinae</taxon>
        <taxon>Lumbricus</taxon>
    </lineage>
</organism>
<evidence type="ECO:0000250" key="1"/>
<evidence type="ECO:0000250" key="2">
    <source>
        <dbReference type="UniProtKB" id="P68137"/>
    </source>
</evidence>
<evidence type="ECO:0000305" key="3"/>
<proteinExistence type="evidence at transcript level"/>
<protein>
    <recommendedName>
        <fullName>Actin-1</fullName>
        <ecNumber evidence="2">3.6.4.-</ecNumber>
    </recommendedName>
</protein>
<dbReference type="EC" id="3.6.4.-" evidence="2"/>
<dbReference type="EMBL" id="X96515">
    <property type="protein sequence ID" value="CAA65364.1"/>
    <property type="molecule type" value="Genomic_DNA"/>
</dbReference>
<dbReference type="EMBL" id="X96512">
    <property type="protein sequence ID" value="CAA65361.1"/>
    <property type="molecule type" value="mRNA"/>
</dbReference>
<dbReference type="EMBL" id="X96514">
    <property type="protein sequence ID" value="CAA65363.1"/>
    <property type="molecule type" value="mRNA"/>
</dbReference>
<dbReference type="PIR" id="JC5227">
    <property type="entry name" value="JC5227"/>
</dbReference>
<dbReference type="SMR" id="P92182"/>
<dbReference type="GO" id="GO:0005737">
    <property type="term" value="C:cytoplasm"/>
    <property type="evidence" value="ECO:0007669"/>
    <property type="project" value="UniProtKB-KW"/>
</dbReference>
<dbReference type="GO" id="GO:0005856">
    <property type="term" value="C:cytoskeleton"/>
    <property type="evidence" value="ECO:0007669"/>
    <property type="project" value="UniProtKB-SubCell"/>
</dbReference>
<dbReference type="GO" id="GO:0005524">
    <property type="term" value="F:ATP binding"/>
    <property type="evidence" value="ECO:0007669"/>
    <property type="project" value="UniProtKB-KW"/>
</dbReference>
<dbReference type="GO" id="GO:0016787">
    <property type="term" value="F:hydrolase activity"/>
    <property type="evidence" value="ECO:0007669"/>
    <property type="project" value="UniProtKB-KW"/>
</dbReference>
<dbReference type="CDD" id="cd10224">
    <property type="entry name" value="ASKHA_NBD_actin"/>
    <property type="match status" value="1"/>
</dbReference>
<dbReference type="FunFam" id="3.30.420.40:FF:000131">
    <property type="entry name" value="Actin, alpha skeletal muscle"/>
    <property type="match status" value="1"/>
</dbReference>
<dbReference type="FunFam" id="3.30.420.40:FF:000291">
    <property type="entry name" value="Actin, alpha skeletal muscle"/>
    <property type="match status" value="1"/>
</dbReference>
<dbReference type="FunFam" id="3.90.640.10:FF:000047">
    <property type="entry name" value="Actin, alpha skeletal muscle"/>
    <property type="match status" value="1"/>
</dbReference>
<dbReference type="FunFam" id="3.30.420.40:FF:000058">
    <property type="entry name" value="Putative actin-related protein 5"/>
    <property type="match status" value="1"/>
</dbReference>
<dbReference type="Gene3D" id="3.30.420.40">
    <property type="match status" value="2"/>
</dbReference>
<dbReference type="Gene3D" id="3.90.640.10">
    <property type="entry name" value="Actin, Chain A, domain 4"/>
    <property type="match status" value="1"/>
</dbReference>
<dbReference type="InterPro" id="IPR004000">
    <property type="entry name" value="Actin"/>
</dbReference>
<dbReference type="InterPro" id="IPR020902">
    <property type="entry name" value="Actin/actin-like_CS"/>
</dbReference>
<dbReference type="InterPro" id="IPR004001">
    <property type="entry name" value="Actin_CS"/>
</dbReference>
<dbReference type="InterPro" id="IPR043129">
    <property type="entry name" value="ATPase_NBD"/>
</dbReference>
<dbReference type="PANTHER" id="PTHR11937">
    <property type="entry name" value="ACTIN"/>
    <property type="match status" value="1"/>
</dbReference>
<dbReference type="Pfam" id="PF00022">
    <property type="entry name" value="Actin"/>
    <property type="match status" value="1"/>
</dbReference>
<dbReference type="PRINTS" id="PR00190">
    <property type="entry name" value="ACTIN"/>
</dbReference>
<dbReference type="SMART" id="SM00268">
    <property type="entry name" value="ACTIN"/>
    <property type="match status" value="1"/>
</dbReference>
<dbReference type="SUPFAM" id="SSF53067">
    <property type="entry name" value="Actin-like ATPase domain"/>
    <property type="match status" value="2"/>
</dbReference>
<dbReference type="PROSITE" id="PS00406">
    <property type="entry name" value="ACTINS_1"/>
    <property type="match status" value="1"/>
</dbReference>
<dbReference type="PROSITE" id="PS00432">
    <property type="entry name" value="ACTINS_2"/>
    <property type="match status" value="1"/>
</dbReference>
<dbReference type="PROSITE" id="PS01132">
    <property type="entry name" value="ACTINS_ACT_LIKE"/>
    <property type="match status" value="1"/>
</dbReference>
<comment type="function">
    <text>Actins are highly conserved proteins that are involved in various types of cell motility and are ubiquitously expressed in all eukaryotic cells.</text>
</comment>
<comment type="catalytic activity">
    <reaction evidence="2">
        <text>ATP + H2O = ADP + phosphate + H(+)</text>
        <dbReference type="Rhea" id="RHEA:13065"/>
        <dbReference type="ChEBI" id="CHEBI:15377"/>
        <dbReference type="ChEBI" id="CHEBI:15378"/>
        <dbReference type="ChEBI" id="CHEBI:30616"/>
        <dbReference type="ChEBI" id="CHEBI:43474"/>
        <dbReference type="ChEBI" id="CHEBI:456216"/>
    </reaction>
</comment>
<comment type="subcellular location">
    <subcellularLocation>
        <location>Cytoplasm</location>
        <location>Cytoskeleton</location>
    </subcellularLocation>
</comment>
<comment type="similarity">
    <text evidence="3">Belongs to the actin family.</text>
</comment>
<accession>P92182</accession>
<feature type="propeptide" id="PRO_0000000692" description="Removed in mature form" evidence="1">
    <location>
        <begin position="1"/>
        <end position="2"/>
    </location>
</feature>
<feature type="chain" id="PRO_0000000693" description="Actin-1">
    <location>
        <begin position="3"/>
        <end position="376"/>
    </location>
</feature>
<feature type="modified residue" description="N-acetylaspartate" evidence="1">
    <location>
        <position position="3"/>
    </location>
</feature>
<sequence>MCDEEVTALVVDNGSGMCKAGFAGDDAPRAVFPSIVGRPRHQGVMVGMGQKDSYVGDEAQSKRGILTLKYPIEHGIVTNWDDMEKIWHHTFYNELRVAPEEHPVLLTEAPLNPKANREKMTQIMFETFNSPAMYVAIQAVLSLYASGRTTGIVLDSGDGVTHTVPIYEGYALPHAILRLDLAGRDLTDYLMKILTERGYSFTTTAEREIVRDIKEKLCYVALDFDQEMGTAASSSSLEKSYELPDGQVITIGNERFRCPESMFQPAFLGMESAGIHETTFNSIMKCDVDIRKDLYANTVMSGGTTMFPGIADRMQKEITSMAPSTMKIKIIAPPERKYSVWIGGSILASLSTFQQMWISKQEYDESGPSIVHRKCF</sequence>